<name>CBIF_PRIMG</name>
<proteinExistence type="evidence at protein level"/>
<accession>O87696</accession>
<gene>
    <name type="primary">cbiF</name>
</gene>
<reference key="1">
    <citation type="journal article" date="1998" name="Biochem. J.">
        <title>Cobalamin (vitamin B12) biosynthesis: identification and characterization of a Bacillus megaterium cobI operon.</title>
        <authorList>
            <person name="Raux E."/>
            <person name="Lanois A."/>
            <person name="Warren M.J."/>
            <person name="Rambach A."/>
            <person name="Thermes C."/>
        </authorList>
    </citation>
    <scope>NUCLEOTIDE SEQUENCE [GENOMIC DNA]</scope>
    <source>
        <strain>DSM 509 / CCM 1464 / NBRC 12109</strain>
    </source>
</reference>
<reference key="2">
    <citation type="journal article" date="2013" name="Proc. Natl. Acad. Sci. U.S.A.">
        <title>Elucidation of the anaerobic pathway for the corrin component of cobalamin (vitamin B12).</title>
        <authorList>
            <person name="Moore S.J."/>
            <person name="Lawrence A.D."/>
            <person name="Biedendieck R."/>
            <person name="Deery E."/>
            <person name="Frank S."/>
            <person name="Howard M.J."/>
            <person name="Rigby S.E."/>
            <person name="Warren M.J."/>
        </authorList>
    </citation>
    <scope>FUNCTION</scope>
    <scope>CATALYTIC ACTIVITY</scope>
</reference>
<reference key="3">
    <citation type="journal article" date="1998" name="Eur. J. Biochem.">
        <title>Cobalamin (vitamin B12) biosynthesis -- cloning, expression and crystallisation of the Bacillus megaterium S-adenosyl-L-methionine-dependent cobalt-precorrin-4 transmethylase CbiF.</title>
        <authorList>
            <person name="Raux E."/>
            <person name="Schubert H.L."/>
            <person name="Woodcock S.C."/>
            <person name="Wilson K.S."/>
            <person name="Warren M.J."/>
        </authorList>
    </citation>
    <scope>X-RAY CRYSTALLOGRAPHY (2.4 ANGSTROMS)</scope>
</reference>
<dbReference type="EC" id="2.1.1.271"/>
<dbReference type="EMBL" id="AJ000758">
    <property type="protein sequence ID" value="CAA04314.1"/>
    <property type="molecule type" value="Genomic_DNA"/>
</dbReference>
<dbReference type="PIR" id="T44690">
    <property type="entry name" value="T44690"/>
</dbReference>
<dbReference type="PDB" id="1CBF">
    <property type="method" value="X-ray"/>
    <property type="resolution" value="2.40 A"/>
    <property type="chains" value="A=1-242"/>
</dbReference>
<dbReference type="PDB" id="2CBF">
    <property type="method" value="X-ray"/>
    <property type="resolution" value="3.10 A"/>
    <property type="chains" value="A=1-231"/>
</dbReference>
<dbReference type="PDBsum" id="1CBF"/>
<dbReference type="PDBsum" id="2CBF"/>
<dbReference type="SMR" id="O87696"/>
<dbReference type="DrugBank" id="DB01752">
    <property type="generic name" value="S-adenosyl-L-homocysteine"/>
</dbReference>
<dbReference type="BRENDA" id="2.1.1.271">
    <property type="organism ID" value="656"/>
</dbReference>
<dbReference type="UniPathway" id="UPA00148">
    <property type="reaction ID" value="UER00226"/>
</dbReference>
<dbReference type="EvolutionaryTrace" id="O87696"/>
<dbReference type="GO" id="GO:0046026">
    <property type="term" value="F:precorrin-4 C11-methyltransferase activity"/>
    <property type="evidence" value="ECO:0007669"/>
    <property type="project" value="InterPro"/>
</dbReference>
<dbReference type="GO" id="GO:0009236">
    <property type="term" value="P:cobalamin biosynthetic process"/>
    <property type="evidence" value="ECO:0007669"/>
    <property type="project" value="UniProtKB-UniPathway"/>
</dbReference>
<dbReference type="GO" id="GO:0032259">
    <property type="term" value="P:methylation"/>
    <property type="evidence" value="ECO:0007669"/>
    <property type="project" value="UniProtKB-KW"/>
</dbReference>
<dbReference type="CDD" id="cd11641">
    <property type="entry name" value="Precorrin-4_C11-MT"/>
    <property type="match status" value="1"/>
</dbReference>
<dbReference type="Gene3D" id="3.40.1010.10">
    <property type="entry name" value="Cobalt-precorrin-4 Transmethylase, Domain 1"/>
    <property type="match status" value="1"/>
</dbReference>
<dbReference type="Gene3D" id="3.30.950.10">
    <property type="entry name" value="Methyltransferase, Cobalt-precorrin-4 Transmethylase, Domain 2"/>
    <property type="match status" value="1"/>
</dbReference>
<dbReference type="InterPro" id="IPR000878">
    <property type="entry name" value="4pyrrol_Mease"/>
</dbReference>
<dbReference type="InterPro" id="IPR035996">
    <property type="entry name" value="4pyrrol_Methylase_sf"/>
</dbReference>
<dbReference type="InterPro" id="IPR014777">
    <property type="entry name" value="4pyrrole_Mease_sub1"/>
</dbReference>
<dbReference type="InterPro" id="IPR014776">
    <property type="entry name" value="4pyrrole_Mease_sub2"/>
</dbReference>
<dbReference type="InterPro" id="IPR006362">
    <property type="entry name" value="Cbl_synth_CobM/CibF"/>
</dbReference>
<dbReference type="InterPro" id="IPR050161">
    <property type="entry name" value="Siro_Cobalamin_biosynth"/>
</dbReference>
<dbReference type="InterPro" id="IPR003043">
    <property type="entry name" value="Uropor_MeTrfase_CS"/>
</dbReference>
<dbReference type="NCBIfam" id="TIGR01465">
    <property type="entry name" value="cobM_cbiF"/>
    <property type="match status" value="1"/>
</dbReference>
<dbReference type="PANTHER" id="PTHR45790:SF4">
    <property type="entry name" value="COBALT-PRECORRIN-4 C(11)-METHYLTRANSFERASE"/>
    <property type="match status" value="1"/>
</dbReference>
<dbReference type="PANTHER" id="PTHR45790">
    <property type="entry name" value="SIROHEME SYNTHASE-RELATED"/>
    <property type="match status" value="1"/>
</dbReference>
<dbReference type="Pfam" id="PF00590">
    <property type="entry name" value="TP_methylase"/>
    <property type="match status" value="1"/>
</dbReference>
<dbReference type="SUPFAM" id="SSF53790">
    <property type="entry name" value="Tetrapyrrole methylase"/>
    <property type="match status" value="1"/>
</dbReference>
<dbReference type="PROSITE" id="PS00839">
    <property type="entry name" value="SUMT_1"/>
    <property type="match status" value="1"/>
</dbReference>
<protein>
    <recommendedName>
        <fullName>Cobalt-precorrin-4 C(11)-methyltransferase</fullName>
        <ecNumber>2.1.1.271</ecNumber>
    </recommendedName>
    <alternativeName>
        <fullName>Cobalt-precorrin-3 methylase</fullName>
    </alternativeName>
</protein>
<keyword id="KW-0002">3D-structure</keyword>
<keyword id="KW-0169">Cobalamin biosynthesis</keyword>
<keyword id="KW-0489">Methyltransferase</keyword>
<keyword id="KW-0949">S-adenosyl-L-methionine</keyword>
<keyword id="KW-0808">Transferase</keyword>
<sequence length="258" mass="28452">MKLYIIGAGPGDPDLITVKGLKLLQQADVVLYADSLVSQDLIAKSKPGAEVLKTAGMHLEEMVGTMLDRMREGKMVVRVHTGDPAMYGAIMEQMVLLKREGVDIEIVPGVTSVFAAAAAAEAELTIPDLTQTVILTRAEGRTPVPEFEKLTDLAKHKCTIALFLSATLTKKVMKEFINAGWSEDTPVVVVYKATWPDEKIVRTTVKDLDDAMRTNGIRKQAMILAGWALDPHIHDKDYRSKLYDKTFTHGFRKGVKSE</sequence>
<feature type="chain" id="PRO_0000150392" description="Cobalt-precorrin-4 C(11)-methyltransferase">
    <location>
        <begin position="1"/>
        <end position="258"/>
    </location>
</feature>
<feature type="strand" evidence="3">
    <location>
        <begin position="1"/>
        <end position="7"/>
    </location>
</feature>
<feature type="strand" evidence="3">
    <location>
        <begin position="9"/>
        <end position="11"/>
    </location>
</feature>
<feature type="helix" evidence="3">
    <location>
        <begin position="13"/>
        <end position="15"/>
    </location>
</feature>
<feature type="helix" evidence="3">
    <location>
        <begin position="18"/>
        <end position="26"/>
    </location>
</feature>
<feature type="strand" evidence="3">
    <location>
        <begin position="28"/>
        <end position="32"/>
    </location>
</feature>
<feature type="turn" evidence="3">
    <location>
        <begin position="34"/>
        <end position="36"/>
    </location>
</feature>
<feature type="helix" evidence="3">
    <location>
        <begin position="39"/>
        <end position="42"/>
    </location>
</feature>
<feature type="strand" evidence="3">
    <location>
        <begin position="50"/>
        <end position="53"/>
    </location>
</feature>
<feature type="helix" evidence="3">
    <location>
        <begin position="59"/>
        <end position="70"/>
    </location>
</feature>
<feature type="turn" evidence="3">
    <location>
        <begin position="71"/>
        <end position="73"/>
    </location>
</feature>
<feature type="strand" evidence="3">
    <location>
        <begin position="76"/>
        <end position="82"/>
    </location>
</feature>
<feature type="turn" evidence="3">
    <location>
        <begin position="84"/>
        <end position="87"/>
    </location>
</feature>
<feature type="helix" evidence="3">
    <location>
        <begin position="91"/>
        <end position="99"/>
    </location>
</feature>
<feature type="strand" evidence="3">
    <location>
        <begin position="103"/>
        <end position="107"/>
    </location>
</feature>
<feature type="helix" evidence="3">
    <location>
        <begin position="112"/>
        <end position="119"/>
    </location>
</feature>
<feature type="turn" evidence="3">
    <location>
        <begin position="127"/>
        <end position="129"/>
    </location>
</feature>
<feature type="strand" evidence="3">
    <location>
        <begin position="133"/>
        <end position="137"/>
    </location>
</feature>
<feature type="strand" evidence="3">
    <location>
        <begin position="140"/>
        <end position="142"/>
    </location>
</feature>
<feature type="helix" evidence="3">
    <location>
        <begin position="146"/>
        <end position="148"/>
    </location>
</feature>
<feature type="helix" evidence="3">
    <location>
        <begin position="150"/>
        <end position="154"/>
    </location>
</feature>
<feature type="strand" evidence="3">
    <location>
        <begin position="158"/>
        <end position="164"/>
    </location>
</feature>
<feature type="helix" evidence="4">
    <location>
        <begin position="166"/>
        <end position="168"/>
    </location>
</feature>
<feature type="helix" evidence="3">
    <location>
        <begin position="169"/>
        <end position="178"/>
    </location>
</feature>
<feature type="strand" evidence="3">
    <location>
        <begin position="186"/>
        <end position="192"/>
    </location>
</feature>
<feature type="strand" evidence="3">
    <location>
        <begin position="199"/>
        <end position="204"/>
    </location>
</feature>
<feature type="helix" evidence="3">
    <location>
        <begin position="205"/>
        <end position="207"/>
    </location>
</feature>
<feature type="helix" evidence="3">
    <location>
        <begin position="208"/>
        <end position="214"/>
    </location>
</feature>
<feature type="strand" evidence="3">
    <location>
        <begin position="219"/>
        <end position="226"/>
    </location>
</feature>
<feature type="helix" evidence="3">
    <location>
        <begin position="227"/>
        <end position="229"/>
    </location>
</feature>
<organism>
    <name type="scientific">Priestia megaterium</name>
    <name type="common">Bacillus megaterium</name>
    <dbReference type="NCBI Taxonomy" id="1404"/>
    <lineage>
        <taxon>Bacteria</taxon>
        <taxon>Bacillati</taxon>
        <taxon>Bacillota</taxon>
        <taxon>Bacilli</taxon>
        <taxon>Bacillales</taxon>
        <taxon>Bacillaceae</taxon>
        <taxon>Priestia</taxon>
    </lineage>
</organism>
<comment type="function">
    <text evidence="1">Catalyzes the methylation of C-11 in cobalt-precorrin-4 to form cobalt-precorrin-5A.</text>
</comment>
<comment type="catalytic activity">
    <reaction evidence="1">
        <text>Co-precorrin-4 + S-adenosyl-L-methionine = Co-precorrin-5A + S-adenosyl-L-homocysteine + H(+)</text>
        <dbReference type="Rhea" id="RHEA:26277"/>
        <dbReference type="ChEBI" id="CHEBI:15378"/>
        <dbReference type="ChEBI" id="CHEBI:57856"/>
        <dbReference type="ChEBI" id="CHEBI:59789"/>
        <dbReference type="ChEBI" id="CHEBI:60061"/>
        <dbReference type="ChEBI" id="CHEBI:60062"/>
        <dbReference type="EC" id="2.1.1.271"/>
    </reaction>
</comment>
<comment type="pathway">
    <text>Cofactor biosynthesis; adenosylcobalamin biosynthesis; cob(II)yrinate a,c-diamide from sirohydrochlorin (anaerobic route): step 4/10.</text>
</comment>
<comment type="subunit">
    <text>Homodimer.</text>
</comment>
<comment type="similarity">
    <text evidence="2">Belongs to the precorrin methyltransferase family.</text>
</comment>
<evidence type="ECO:0000269" key="1">
    <source>
    </source>
</evidence>
<evidence type="ECO:0000305" key="2"/>
<evidence type="ECO:0007829" key="3">
    <source>
        <dbReference type="PDB" id="1CBF"/>
    </source>
</evidence>
<evidence type="ECO:0007829" key="4">
    <source>
        <dbReference type="PDB" id="2CBF"/>
    </source>
</evidence>